<feature type="signal peptide" evidence="1">
    <location>
        <begin position="1"/>
        <end position="23"/>
    </location>
</feature>
<feature type="chain" id="PRO_5014309423" description="Early nodulin-like protein 6">
    <location>
        <begin position="24"/>
        <end position="149"/>
    </location>
</feature>
<feature type="propeptide" id="PRO_0000457737" description="Removed in mature form" evidence="1">
    <location>
        <begin position="150"/>
        <end position="177"/>
    </location>
</feature>
<feature type="domain" description="Phytocyanin" evidence="3">
    <location>
        <begin position="24"/>
        <end position="127"/>
    </location>
</feature>
<feature type="lipid moiety-binding region" description="GPI-anchor amidated asparagine" evidence="1">
    <location>
        <position position="149"/>
    </location>
</feature>
<feature type="glycosylation site" description="N-linked (GlcNAc...) asparagine" evidence="2">
    <location>
        <position position="41"/>
    </location>
</feature>
<feature type="disulfide bond" evidence="3">
    <location>
        <begin position="81"/>
        <end position="115"/>
    </location>
</feature>
<keyword id="KW-1003">Cell membrane</keyword>
<keyword id="KW-1015">Disulfide bond</keyword>
<keyword id="KW-0325">Glycoprotein</keyword>
<keyword id="KW-0336">GPI-anchor</keyword>
<keyword id="KW-0449">Lipoprotein</keyword>
<keyword id="KW-0472">Membrane</keyword>
<keyword id="KW-1185">Reference proteome</keyword>
<keyword id="KW-0732">Signal</keyword>
<organism>
    <name type="scientific">Arabidopsis thaliana</name>
    <name type="common">Mouse-ear cress</name>
    <dbReference type="NCBI Taxonomy" id="3702"/>
    <lineage>
        <taxon>Eukaryota</taxon>
        <taxon>Viridiplantae</taxon>
        <taxon>Streptophyta</taxon>
        <taxon>Embryophyta</taxon>
        <taxon>Tracheophyta</taxon>
        <taxon>Spermatophyta</taxon>
        <taxon>Magnoliopsida</taxon>
        <taxon>eudicotyledons</taxon>
        <taxon>Gunneridae</taxon>
        <taxon>Pentapetalae</taxon>
        <taxon>rosids</taxon>
        <taxon>malvids</taxon>
        <taxon>Brassicales</taxon>
        <taxon>Brassicaceae</taxon>
        <taxon>Camelineae</taxon>
        <taxon>Arabidopsis</taxon>
    </lineage>
</organism>
<accession>Q4PSZ8</accession>
<accession>Q9M996</accession>
<dbReference type="EMBL" id="AC016041">
    <property type="protein sequence ID" value="AAF69706.1"/>
    <property type="status" value="ALT_SEQ"/>
    <property type="molecule type" value="Genomic_DNA"/>
</dbReference>
<dbReference type="EMBL" id="AC084414">
    <property type="protein sequence ID" value="AAG29741.1"/>
    <property type="status" value="ALT_SEQ"/>
    <property type="molecule type" value="Genomic_DNA"/>
</dbReference>
<dbReference type="EMBL" id="CP002684">
    <property type="protein sequence ID" value="AEE32369.1"/>
    <property type="molecule type" value="Genomic_DNA"/>
</dbReference>
<dbReference type="EMBL" id="DQ056488">
    <property type="protein sequence ID" value="AAY78645.1"/>
    <property type="molecule type" value="mRNA"/>
</dbReference>
<dbReference type="RefSeq" id="NP_175324.1">
    <property type="nucleotide sequence ID" value="NM_103787.2"/>
</dbReference>
<dbReference type="SMR" id="Q4PSZ8"/>
<dbReference type="STRING" id="3702.Q4PSZ8"/>
<dbReference type="GlyGen" id="Q4PSZ8">
    <property type="glycosylation" value="1 site"/>
</dbReference>
<dbReference type="PaxDb" id="3702-AT1G48940.1"/>
<dbReference type="ProteomicsDB" id="185143"/>
<dbReference type="EnsemblPlants" id="AT1G48940.1">
    <property type="protein sequence ID" value="AT1G48940.1"/>
    <property type="gene ID" value="AT1G48940"/>
</dbReference>
<dbReference type="GeneID" id="841316"/>
<dbReference type="Gramene" id="AT1G48940.1">
    <property type="protein sequence ID" value="AT1G48940.1"/>
    <property type="gene ID" value="AT1G48940"/>
</dbReference>
<dbReference type="KEGG" id="ath:AT1G48940"/>
<dbReference type="Araport" id="AT1G48940"/>
<dbReference type="TAIR" id="AT1G48940">
    <property type="gene designation" value="ENODL6"/>
</dbReference>
<dbReference type="eggNOG" id="ENOG502S114">
    <property type="taxonomic scope" value="Eukaryota"/>
</dbReference>
<dbReference type="HOGENOM" id="CLU_058719_1_3_1"/>
<dbReference type="InParanoid" id="Q4PSZ8"/>
<dbReference type="OMA" id="SGETGHC"/>
<dbReference type="OrthoDB" id="959565at2759"/>
<dbReference type="PRO" id="PR:Q4PSZ8"/>
<dbReference type="Proteomes" id="UP000006548">
    <property type="component" value="Chromosome 1"/>
</dbReference>
<dbReference type="ExpressionAtlas" id="Q4PSZ8">
    <property type="expression patterns" value="baseline and differential"/>
</dbReference>
<dbReference type="GO" id="GO:0005886">
    <property type="term" value="C:plasma membrane"/>
    <property type="evidence" value="ECO:0007669"/>
    <property type="project" value="UniProtKB-SubCell"/>
</dbReference>
<dbReference type="GO" id="GO:0098552">
    <property type="term" value="C:side of membrane"/>
    <property type="evidence" value="ECO:0007669"/>
    <property type="project" value="UniProtKB-KW"/>
</dbReference>
<dbReference type="GO" id="GO:0009055">
    <property type="term" value="F:electron transfer activity"/>
    <property type="evidence" value="ECO:0007669"/>
    <property type="project" value="InterPro"/>
</dbReference>
<dbReference type="CDD" id="cd11019">
    <property type="entry name" value="OsENODL1_like"/>
    <property type="match status" value="1"/>
</dbReference>
<dbReference type="FunFam" id="2.60.40.420:FF:000010">
    <property type="entry name" value="Early nodulin-like protein 1"/>
    <property type="match status" value="1"/>
</dbReference>
<dbReference type="Gene3D" id="2.60.40.420">
    <property type="entry name" value="Cupredoxins - blue copper proteins"/>
    <property type="match status" value="1"/>
</dbReference>
<dbReference type="InterPro" id="IPR008972">
    <property type="entry name" value="Cupredoxin"/>
</dbReference>
<dbReference type="InterPro" id="IPR041846">
    <property type="entry name" value="ENL_dom"/>
</dbReference>
<dbReference type="InterPro" id="IPR039391">
    <property type="entry name" value="Phytocyanin-like"/>
</dbReference>
<dbReference type="InterPro" id="IPR003245">
    <property type="entry name" value="Phytocyanin_dom"/>
</dbReference>
<dbReference type="PANTHER" id="PTHR33021">
    <property type="entry name" value="BLUE COPPER PROTEIN"/>
    <property type="match status" value="1"/>
</dbReference>
<dbReference type="PANTHER" id="PTHR33021:SF289">
    <property type="entry name" value="EARLY NODULIN-LIKE PROTEIN 5-RELATED"/>
    <property type="match status" value="1"/>
</dbReference>
<dbReference type="Pfam" id="PF02298">
    <property type="entry name" value="Cu_bind_like"/>
    <property type="match status" value="1"/>
</dbReference>
<dbReference type="SUPFAM" id="SSF49503">
    <property type="entry name" value="Cupredoxins"/>
    <property type="match status" value="1"/>
</dbReference>
<dbReference type="PROSITE" id="PS51485">
    <property type="entry name" value="PHYTOCYANIN"/>
    <property type="match status" value="1"/>
</dbReference>
<proteinExistence type="evidence at transcript level"/>
<comment type="function">
    <text evidence="6">May act as a carbohydrate transporter.</text>
</comment>
<comment type="subcellular location">
    <subcellularLocation>
        <location evidence="1">Cell membrane</location>
        <topology evidence="1">Lipid-anchor</topology>
        <topology evidence="1">GPI-anchor</topology>
    </subcellularLocation>
</comment>
<comment type="tissue specificity">
    <text evidence="4">Confined to flowers.</text>
</comment>
<comment type="similarity">
    <text evidence="7">Belongs to the early nodulin-like (ENODL) family.</text>
</comment>
<comment type="sequence caution" evidence="7">
    <conflict type="erroneous gene model prediction">
        <sequence resource="EMBL-CDS" id="AAF69706"/>
    </conflict>
</comment>
<comment type="sequence caution" evidence="7">
    <conflict type="erroneous gene model prediction">
        <sequence resource="EMBL-CDS" id="AAG29741"/>
    </conflict>
</comment>
<name>ENL06_ARATH</name>
<gene>
    <name evidence="5" type="primary">ENODL6</name>
    <name evidence="5" type="synonym">EN6</name>
    <name evidence="8" type="ordered locus">At1g48940</name>
    <name evidence="9" type="ORF">F27K7.4</name>
</gene>
<reference key="1">
    <citation type="journal article" date="2000" name="Nature">
        <title>Sequence and analysis of chromosome 1 of the plant Arabidopsis thaliana.</title>
        <authorList>
            <person name="Theologis A."/>
            <person name="Ecker J.R."/>
            <person name="Palm C.J."/>
            <person name="Federspiel N.A."/>
            <person name="Kaul S."/>
            <person name="White O."/>
            <person name="Alonso J."/>
            <person name="Altafi H."/>
            <person name="Araujo R."/>
            <person name="Bowman C.L."/>
            <person name="Brooks S.Y."/>
            <person name="Buehler E."/>
            <person name="Chan A."/>
            <person name="Chao Q."/>
            <person name="Chen H."/>
            <person name="Cheuk R.F."/>
            <person name="Chin C.W."/>
            <person name="Chung M.K."/>
            <person name="Conn L."/>
            <person name="Conway A.B."/>
            <person name="Conway A.R."/>
            <person name="Creasy T.H."/>
            <person name="Dewar K."/>
            <person name="Dunn P."/>
            <person name="Etgu P."/>
            <person name="Feldblyum T.V."/>
            <person name="Feng J.-D."/>
            <person name="Fong B."/>
            <person name="Fujii C.Y."/>
            <person name="Gill J.E."/>
            <person name="Goldsmith A.D."/>
            <person name="Haas B."/>
            <person name="Hansen N.F."/>
            <person name="Hughes B."/>
            <person name="Huizar L."/>
            <person name="Hunter J.L."/>
            <person name="Jenkins J."/>
            <person name="Johnson-Hopson C."/>
            <person name="Khan S."/>
            <person name="Khaykin E."/>
            <person name="Kim C.J."/>
            <person name="Koo H.L."/>
            <person name="Kremenetskaia I."/>
            <person name="Kurtz D.B."/>
            <person name="Kwan A."/>
            <person name="Lam B."/>
            <person name="Langin-Hooper S."/>
            <person name="Lee A."/>
            <person name="Lee J.M."/>
            <person name="Lenz C.A."/>
            <person name="Li J.H."/>
            <person name="Li Y.-P."/>
            <person name="Lin X."/>
            <person name="Liu S.X."/>
            <person name="Liu Z.A."/>
            <person name="Luros J.S."/>
            <person name="Maiti R."/>
            <person name="Marziali A."/>
            <person name="Militscher J."/>
            <person name="Miranda M."/>
            <person name="Nguyen M."/>
            <person name="Nierman W.C."/>
            <person name="Osborne B.I."/>
            <person name="Pai G."/>
            <person name="Peterson J."/>
            <person name="Pham P.K."/>
            <person name="Rizzo M."/>
            <person name="Rooney T."/>
            <person name="Rowley D."/>
            <person name="Sakano H."/>
            <person name="Salzberg S.L."/>
            <person name="Schwartz J.R."/>
            <person name="Shinn P."/>
            <person name="Southwick A.M."/>
            <person name="Sun H."/>
            <person name="Tallon L.J."/>
            <person name="Tambunga G."/>
            <person name="Toriumi M.J."/>
            <person name="Town C.D."/>
            <person name="Utterback T."/>
            <person name="Van Aken S."/>
            <person name="Vaysberg M."/>
            <person name="Vysotskaia V.S."/>
            <person name="Walker M."/>
            <person name="Wu D."/>
            <person name="Yu G."/>
            <person name="Fraser C.M."/>
            <person name="Venter J.C."/>
            <person name="Davis R.W."/>
        </authorList>
    </citation>
    <scope>NUCLEOTIDE SEQUENCE [LARGE SCALE GENOMIC DNA]</scope>
    <source>
        <strain>cv. Columbia</strain>
    </source>
</reference>
<reference key="2">
    <citation type="journal article" date="2017" name="Plant J.">
        <title>Araport11: a complete reannotation of the Arabidopsis thaliana reference genome.</title>
        <authorList>
            <person name="Cheng C.Y."/>
            <person name="Krishnakumar V."/>
            <person name="Chan A.P."/>
            <person name="Thibaud-Nissen F."/>
            <person name="Schobel S."/>
            <person name="Town C.D."/>
        </authorList>
    </citation>
    <scope>GENOME REANNOTATION</scope>
    <source>
        <strain>cv. Columbia</strain>
    </source>
</reference>
<reference key="3">
    <citation type="journal article" date="2006" name="Plant Biotechnol. J.">
        <title>Simultaneous high-throughput recombinational cloning of open reading frames in closed and open configurations.</title>
        <authorList>
            <person name="Underwood B.A."/>
            <person name="Vanderhaeghen R."/>
            <person name="Whitford R."/>
            <person name="Town C.D."/>
            <person name="Hilson P."/>
        </authorList>
    </citation>
    <scope>NUCLEOTIDE SEQUENCE [LARGE SCALE MRNA]</scope>
    <source>
        <strain>cv. Columbia</strain>
    </source>
</reference>
<reference key="4">
    <citation type="journal article" date="2003" name="Plant Physiol.">
        <title>Identification of glycosylphosphatidylinositol-anchored proteins in Arabidopsis. A proteomic and genomic analysis.</title>
        <authorList>
            <person name="Borner G.H.H."/>
            <person name="Lilley K.S."/>
            <person name="Stevens T.J."/>
            <person name="Dupree P."/>
        </authorList>
    </citation>
    <scope>GENE FAMILY</scope>
    <source>
        <strain>cv. Columbia</strain>
    </source>
</reference>
<reference key="5">
    <citation type="journal article" date="2009" name="Biosci. Biotechnol. Biochem.">
        <title>Genome-wide identification, structure and expression studies, and mutant collection of 22 early nodulin-like protein genes in Arabidopsis.</title>
        <authorList>
            <person name="Mashiguchi K."/>
            <person name="Asami T."/>
            <person name="Suzuki Y."/>
        </authorList>
    </citation>
    <scope>TISSUE SPECIFICITY</scope>
    <scope>GENE FAMILY</scope>
    <scope>NOMENCLATURE</scope>
    <source>
        <strain>cv. Columbia</strain>
    </source>
</reference>
<reference key="6">
    <citation type="journal article" date="2014" name="Plant Cell Physiol.">
        <title>Emerging functions of nodulin-like proteins in non-nodulating plant species.</title>
        <authorList>
            <person name="Denance N."/>
            <person name="Szurek B."/>
            <person name="Noel L.D."/>
        </authorList>
    </citation>
    <scope>REVIEW ON NODULIN-LIKE PROTEINS</scope>
</reference>
<sequence length="177" mass="19750">MGGQKIVLLSIFVCFYVFSLVSCTEFEAGGENGWIIPQSSNQSDIFNQWASKNRFKVGDTIRFKYKKDSVLVVTEDEYKKCQTTKPELYSNHDDTVFKLDRPGLFYFISGVSGHCEQGQKMIIKVMEVESTPQSPPPSSSLPASAHKKNHAVRKTSRFLGAGLVTISILVITVFSLV</sequence>
<evidence type="ECO:0000255" key="1"/>
<evidence type="ECO:0000255" key="2">
    <source>
        <dbReference type="PROSITE-ProRule" id="PRU00498"/>
    </source>
</evidence>
<evidence type="ECO:0000255" key="3">
    <source>
        <dbReference type="PROSITE-ProRule" id="PRU00818"/>
    </source>
</evidence>
<evidence type="ECO:0000269" key="4">
    <source>
    </source>
</evidence>
<evidence type="ECO:0000303" key="5">
    <source>
    </source>
</evidence>
<evidence type="ECO:0000303" key="6">
    <source>
    </source>
</evidence>
<evidence type="ECO:0000305" key="7"/>
<evidence type="ECO:0000312" key="8">
    <source>
        <dbReference type="Araport" id="AT1G48940"/>
    </source>
</evidence>
<evidence type="ECO:0000312" key="9">
    <source>
        <dbReference type="EMBL" id="AAG29741.1"/>
    </source>
</evidence>
<protein>
    <recommendedName>
        <fullName evidence="5">Early nodulin-like protein 6</fullName>
        <shortName evidence="5">AtENODL6</shortName>
    </recommendedName>
    <alternativeName>
        <fullName evidence="7">Phytocyanin-like protein ENODL6</fullName>
    </alternativeName>
</protein>